<name>YIDH_ECOLI</name>
<organism>
    <name type="scientific">Escherichia coli (strain K12)</name>
    <dbReference type="NCBI Taxonomy" id="83333"/>
    <lineage>
        <taxon>Bacteria</taxon>
        <taxon>Pseudomonadati</taxon>
        <taxon>Pseudomonadota</taxon>
        <taxon>Gammaproteobacteria</taxon>
        <taxon>Enterobacterales</taxon>
        <taxon>Enterobacteriaceae</taxon>
        <taxon>Escherichia</taxon>
    </lineage>
</organism>
<comment type="subcellular location">
    <subcellularLocation>
        <location>Cell inner membrane</location>
        <topology>Multi-pass membrane protein</topology>
    </subcellularLocation>
</comment>
<comment type="similarity">
    <text evidence="2">To M.tuberculosis Rv2272.</text>
</comment>
<sequence length="115" mass="12779">MKISRLGEAPDYRFSLANERTFLAWIRTALGFLAAGVGLDQLAPDFATPVIRELLALLLCLFSGGLAMYGYLRWLRNEKAMRLKEDLPYTNSLLIISLILMVVAVIVMGLVLYAG</sequence>
<evidence type="ECO:0000255" key="1"/>
<evidence type="ECO:0000305" key="2"/>
<proteinExistence type="evidence at protein level"/>
<dbReference type="EMBL" id="L10328">
    <property type="protein sequence ID" value="AAA62028.1"/>
    <property type="molecule type" value="Genomic_DNA"/>
</dbReference>
<dbReference type="EMBL" id="U00096">
    <property type="protein sequence ID" value="AAC76699.1"/>
    <property type="molecule type" value="Genomic_DNA"/>
</dbReference>
<dbReference type="EMBL" id="AP009048">
    <property type="protein sequence ID" value="BAE77617.1"/>
    <property type="molecule type" value="Genomic_DNA"/>
</dbReference>
<dbReference type="PIR" id="E65169">
    <property type="entry name" value="E65169"/>
</dbReference>
<dbReference type="RefSeq" id="NP_418132.1">
    <property type="nucleotide sequence ID" value="NC_000913.3"/>
</dbReference>
<dbReference type="RefSeq" id="WP_000703959.1">
    <property type="nucleotide sequence ID" value="NZ_STEB01000015.1"/>
</dbReference>
<dbReference type="SMR" id="P0ADM0"/>
<dbReference type="BioGRID" id="4262587">
    <property type="interactions" value="6"/>
</dbReference>
<dbReference type="DIP" id="DIP-47894N"/>
<dbReference type="FunCoup" id="P0ADM0">
    <property type="interactions" value="5"/>
</dbReference>
<dbReference type="STRING" id="511145.b3676"/>
<dbReference type="TCDB" id="9.B.51.1.1">
    <property type="family name" value="the uncharacterized duf202/yidh (yidh) family"/>
</dbReference>
<dbReference type="PaxDb" id="511145-b3676"/>
<dbReference type="EnsemblBacteria" id="AAC76699">
    <property type="protein sequence ID" value="AAC76699"/>
    <property type="gene ID" value="b3676"/>
</dbReference>
<dbReference type="GeneID" id="948190"/>
<dbReference type="KEGG" id="ecj:JW3652"/>
<dbReference type="KEGG" id="eco:b3676"/>
<dbReference type="KEGG" id="ecoc:C3026_19935"/>
<dbReference type="PATRIC" id="fig|511145.12.peg.3797"/>
<dbReference type="EchoBASE" id="EB1647"/>
<dbReference type="eggNOG" id="COG2149">
    <property type="taxonomic scope" value="Bacteria"/>
</dbReference>
<dbReference type="HOGENOM" id="CLU_053359_4_1_6"/>
<dbReference type="InParanoid" id="P0ADM0"/>
<dbReference type="OMA" id="NHWVRCE"/>
<dbReference type="OrthoDB" id="582337at2"/>
<dbReference type="PhylomeDB" id="P0ADM0"/>
<dbReference type="BioCyc" id="EcoCyc:EG11696-MONOMER"/>
<dbReference type="PRO" id="PR:P0ADM0"/>
<dbReference type="Proteomes" id="UP000000625">
    <property type="component" value="Chromosome"/>
</dbReference>
<dbReference type="GO" id="GO:0005886">
    <property type="term" value="C:plasma membrane"/>
    <property type="evidence" value="ECO:0000314"/>
    <property type="project" value="EcoCyc"/>
</dbReference>
<dbReference type="GO" id="GO:0006979">
    <property type="term" value="P:response to oxidative stress"/>
    <property type="evidence" value="ECO:0000315"/>
    <property type="project" value="EcoCyc"/>
</dbReference>
<dbReference type="InterPro" id="IPR003807">
    <property type="entry name" value="DUF202"/>
</dbReference>
<dbReference type="InterPro" id="IPR052053">
    <property type="entry name" value="IM_YidH-like"/>
</dbReference>
<dbReference type="PANTHER" id="PTHR34187:SF2">
    <property type="entry name" value="DUF202 DOMAIN-CONTAINING PROTEIN"/>
    <property type="match status" value="1"/>
</dbReference>
<dbReference type="PANTHER" id="PTHR34187">
    <property type="entry name" value="FGR18P"/>
    <property type="match status" value="1"/>
</dbReference>
<dbReference type="Pfam" id="PF02656">
    <property type="entry name" value="DUF202"/>
    <property type="match status" value="1"/>
</dbReference>
<feature type="chain" id="PRO_0000169628" description="Inner membrane protein YidH">
    <location>
        <begin position="1"/>
        <end position="115"/>
    </location>
</feature>
<feature type="topological domain" description="Cytoplasmic" evidence="1">
    <location>
        <begin position="1"/>
        <end position="30"/>
    </location>
</feature>
<feature type="transmembrane region" description="Helical" evidence="1">
    <location>
        <begin position="31"/>
        <end position="51"/>
    </location>
</feature>
<feature type="topological domain" description="Periplasmic" evidence="1">
    <location>
        <begin position="52"/>
        <end position="53"/>
    </location>
</feature>
<feature type="transmembrane region" description="Helical" evidence="1">
    <location>
        <begin position="54"/>
        <end position="74"/>
    </location>
</feature>
<feature type="topological domain" description="Cytoplasmic" evidence="1">
    <location>
        <begin position="75"/>
        <end position="92"/>
    </location>
</feature>
<feature type="transmembrane region" description="Helical" evidence="1">
    <location>
        <begin position="93"/>
        <end position="113"/>
    </location>
</feature>
<feature type="topological domain" description="Periplasmic" evidence="1">
    <location>
        <begin position="114"/>
        <end position="115"/>
    </location>
</feature>
<gene>
    <name type="primary">yidH</name>
    <name type="ordered locus">b3676</name>
    <name type="ordered locus">JW3652</name>
</gene>
<keyword id="KW-0997">Cell inner membrane</keyword>
<keyword id="KW-1003">Cell membrane</keyword>
<keyword id="KW-0472">Membrane</keyword>
<keyword id="KW-1185">Reference proteome</keyword>
<keyword id="KW-0812">Transmembrane</keyword>
<keyword id="KW-1133">Transmembrane helix</keyword>
<reference key="1">
    <citation type="journal article" date="1993" name="Genomics">
        <title>DNA sequence and analysis of 136 kilobases of the Escherichia coli genome: organizational symmetry around the origin of replication.</title>
        <authorList>
            <person name="Burland V.D."/>
            <person name="Plunkett G. III"/>
            <person name="Daniels D.L."/>
            <person name="Blattner F.R."/>
        </authorList>
    </citation>
    <scope>NUCLEOTIDE SEQUENCE [LARGE SCALE GENOMIC DNA]</scope>
    <source>
        <strain>K12 / MG1655 / ATCC 47076</strain>
    </source>
</reference>
<reference key="2">
    <citation type="journal article" date="1997" name="Science">
        <title>The complete genome sequence of Escherichia coli K-12.</title>
        <authorList>
            <person name="Blattner F.R."/>
            <person name="Plunkett G. III"/>
            <person name="Bloch C.A."/>
            <person name="Perna N.T."/>
            <person name="Burland V."/>
            <person name="Riley M."/>
            <person name="Collado-Vides J."/>
            <person name="Glasner J.D."/>
            <person name="Rode C.K."/>
            <person name="Mayhew G.F."/>
            <person name="Gregor J."/>
            <person name="Davis N.W."/>
            <person name="Kirkpatrick H.A."/>
            <person name="Goeden M.A."/>
            <person name="Rose D.J."/>
            <person name="Mau B."/>
            <person name="Shao Y."/>
        </authorList>
    </citation>
    <scope>NUCLEOTIDE SEQUENCE [LARGE SCALE GENOMIC DNA]</scope>
    <source>
        <strain>K12 / MG1655 / ATCC 47076</strain>
    </source>
</reference>
<reference key="3">
    <citation type="journal article" date="2006" name="Mol. Syst. Biol.">
        <title>Highly accurate genome sequences of Escherichia coli K-12 strains MG1655 and W3110.</title>
        <authorList>
            <person name="Hayashi K."/>
            <person name="Morooka N."/>
            <person name="Yamamoto Y."/>
            <person name="Fujita K."/>
            <person name="Isono K."/>
            <person name="Choi S."/>
            <person name="Ohtsubo E."/>
            <person name="Baba T."/>
            <person name="Wanner B.L."/>
            <person name="Mori H."/>
            <person name="Horiuchi T."/>
        </authorList>
    </citation>
    <scope>NUCLEOTIDE SEQUENCE [LARGE SCALE GENOMIC DNA]</scope>
    <source>
        <strain>K12 / W3110 / ATCC 27325 / DSM 5911</strain>
    </source>
</reference>
<reference key="4">
    <citation type="journal article" date="2005" name="Science">
        <title>Global topology analysis of the Escherichia coli inner membrane proteome.</title>
        <authorList>
            <person name="Daley D.O."/>
            <person name="Rapp M."/>
            <person name="Granseth E."/>
            <person name="Melen K."/>
            <person name="Drew D."/>
            <person name="von Heijne G."/>
        </authorList>
    </citation>
    <scope>TOPOLOGY [LARGE SCALE ANALYSIS]</scope>
    <source>
        <strain>K12 / MG1655 / ATCC 47076</strain>
    </source>
</reference>
<protein>
    <recommendedName>
        <fullName>Inner membrane protein YidH</fullName>
    </recommendedName>
</protein>
<accession>P0ADM0</accession>
<accession>P31445</accession>
<accession>Q2M7Y9</accession>